<protein>
    <recommendedName>
        <fullName evidence="1">Bifunctional purine biosynthesis protein PurH</fullName>
    </recommendedName>
    <domain>
        <recommendedName>
            <fullName evidence="1">Phosphoribosylaminoimidazolecarboxamide formyltransferase</fullName>
            <ecNumber evidence="1">2.1.2.3</ecNumber>
        </recommendedName>
        <alternativeName>
            <fullName evidence="1">AICAR transformylase</fullName>
        </alternativeName>
    </domain>
    <domain>
        <recommendedName>
            <fullName evidence="1">IMP cyclohydrolase</fullName>
            <ecNumber evidence="1">3.5.4.10</ecNumber>
        </recommendedName>
        <alternativeName>
            <fullName evidence="1">ATIC</fullName>
        </alternativeName>
        <alternativeName>
            <fullName evidence="1">IMP synthase</fullName>
        </alternativeName>
        <alternativeName>
            <fullName evidence="1">Inosinicase</fullName>
        </alternativeName>
    </domain>
</protein>
<proteinExistence type="inferred from homology"/>
<gene>
    <name evidence="1" type="primary">purH</name>
    <name type="ordered locus">lp_2720</name>
</gene>
<comment type="catalytic activity">
    <reaction evidence="1">
        <text>(6R)-10-formyltetrahydrofolate + 5-amino-1-(5-phospho-beta-D-ribosyl)imidazole-4-carboxamide = 5-formamido-1-(5-phospho-D-ribosyl)imidazole-4-carboxamide + (6S)-5,6,7,8-tetrahydrofolate</text>
        <dbReference type="Rhea" id="RHEA:22192"/>
        <dbReference type="ChEBI" id="CHEBI:57453"/>
        <dbReference type="ChEBI" id="CHEBI:58467"/>
        <dbReference type="ChEBI" id="CHEBI:58475"/>
        <dbReference type="ChEBI" id="CHEBI:195366"/>
        <dbReference type="EC" id="2.1.2.3"/>
    </reaction>
</comment>
<comment type="catalytic activity">
    <reaction evidence="1">
        <text>IMP + H2O = 5-formamido-1-(5-phospho-D-ribosyl)imidazole-4-carboxamide</text>
        <dbReference type="Rhea" id="RHEA:18445"/>
        <dbReference type="ChEBI" id="CHEBI:15377"/>
        <dbReference type="ChEBI" id="CHEBI:58053"/>
        <dbReference type="ChEBI" id="CHEBI:58467"/>
        <dbReference type="EC" id="3.5.4.10"/>
    </reaction>
</comment>
<comment type="pathway">
    <text evidence="1">Purine metabolism; IMP biosynthesis via de novo pathway; 5-formamido-1-(5-phospho-D-ribosyl)imidazole-4-carboxamide from 5-amino-1-(5-phospho-D-ribosyl)imidazole-4-carboxamide (10-formyl THF route): step 1/1.</text>
</comment>
<comment type="pathway">
    <text evidence="1">Purine metabolism; IMP biosynthesis via de novo pathway; IMP from 5-formamido-1-(5-phospho-D-ribosyl)imidazole-4-carboxamide: step 1/1.</text>
</comment>
<comment type="domain">
    <text evidence="1">The IMP cyclohydrolase activity resides in the N-terminal region.</text>
</comment>
<comment type="similarity">
    <text evidence="1">Belongs to the PurH family.</text>
</comment>
<sequence length="510" mass="55306">MTKRALLSVSDKQGLTDFAKGLVALDYELISTGGTKKALEAADIPVIGIEEVTGFPEMLDGRVKTLHPKVHAGLLARRDLPAHMAQLKAAGIQPIDMVVVNLYPFKATIQQPDVTQAEAIEQIDIGGPSMLRSAAKNFAAVLPIVDPADYEQILADLQTDAVTPALRQRLAAKVFQHTAAYDALIAQYLTTEEFPEKLTLTYDKKQALRYGENSHQKAAFYENALPTHFSITGAKQIHGKELSYNNIKDADAALRMVSEYQQPAVVAMKHMNPCGVGLGTTIEAAWDKAYEADSISIFGGIIALNRPVDLATAEKMHALFLEIIIAPSFDDDAFAILAKKKNLRLMTVDFEQTHTADKFETISVGGGLLRQEVDAAFETPADFTVVTVTQPTPAQLKALAFGQQVVKHVKSNAVVVTTADRTLGIGSGQMNRIDSTKIAIGKAMKQAGYENAILASDAFFPMDDCVEYAAQHGIRAIVQPGGSIRDKDSIAMADRYGIAMVTTGVRHFRH</sequence>
<keyword id="KW-0378">Hydrolase</keyword>
<keyword id="KW-0511">Multifunctional enzyme</keyword>
<keyword id="KW-0658">Purine biosynthesis</keyword>
<keyword id="KW-1185">Reference proteome</keyword>
<keyword id="KW-0808">Transferase</keyword>
<dbReference type="EC" id="2.1.2.3" evidence="1"/>
<dbReference type="EC" id="3.5.4.10" evidence="1"/>
<dbReference type="EMBL" id="AL935263">
    <property type="protein sequence ID" value="CCC79835.1"/>
    <property type="molecule type" value="Genomic_DNA"/>
</dbReference>
<dbReference type="RefSeq" id="WP_011101892.1">
    <property type="nucleotide sequence ID" value="NC_004567.2"/>
</dbReference>
<dbReference type="RefSeq" id="YP_004890349.1">
    <property type="nucleotide sequence ID" value="NC_004567.2"/>
</dbReference>
<dbReference type="SMR" id="Q88U29"/>
<dbReference type="STRING" id="220668.lp_2720"/>
<dbReference type="EnsemblBacteria" id="CCC79835">
    <property type="protein sequence ID" value="CCC79835"/>
    <property type="gene ID" value="lp_2720"/>
</dbReference>
<dbReference type="KEGG" id="lpl:lp_2720"/>
<dbReference type="PATRIC" id="fig|220668.9.peg.2275"/>
<dbReference type="eggNOG" id="COG0138">
    <property type="taxonomic scope" value="Bacteria"/>
</dbReference>
<dbReference type="HOGENOM" id="CLU_016316_5_2_9"/>
<dbReference type="OrthoDB" id="9802065at2"/>
<dbReference type="PhylomeDB" id="Q88U29"/>
<dbReference type="UniPathway" id="UPA00074">
    <property type="reaction ID" value="UER00133"/>
</dbReference>
<dbReference type="UniPathway" id="UPA00074">
    <property type="reaction ID" value="UER00135"/>
</dbReference>
<dbReference type="Proteomes" id="UP000000432">
    <property type="component" value="Chromosome"/>
</dbReference>
<dbReference type="GO" id="GO:0005829">
    <property type="term" value="C:cytosol"/>
    <property type="evidence" value="ECO:0007669"/>
    <property type="project" value="TreeGrafter"/>
</dbReference>
<dbReference type="GO" id="GO:0003937">
    <property type="term" value="F:IMP cyclohydrolase activity"/>
    <property type="evidence" value="ECO:0007669"/>
    <property type="project" value="UniProtKB-UniRule"/>
</dbReference>
<dbReference type="GO" id="GO:0004643">
    <property type="term" value="F:phosphoribosylaminoimidazolecarboxamide formyltransferase activity"/>
    <property type="evidence" value="ECO:0007669"/>
    <property type="project" value="UniProtKB-UniRule"/>
</dbReference>
<dbReference type="GO" id="GO:0006189">
    <property type="term" value="P:'de novo' IMP biosynthetic process"/>
    <property type="evidence" value="ECO:0007669"/>
    <property type="project" value="UniProtKB-UniRule"/>
</dbReference>
<dbReference type="CDD" id="cd01421">
    <property type="entry name" value="IMPCH"/>
    <property type="match status" value="1"/>
</dbReference>
<dbReference type="FunFam" id="3.40.140.20:FF:000001">
    <property type="entry name" value="Bifunctional purine biosynthesis protein PurH"/>
    <property type="match status" value="1"/>
</dbReference>
<dbReference type="FunFam" id="3.40.140.20:FF:000002">
    <property type="entry name" value="Bifunctional purine biosynthesis protein PurH"/>
    <property type="match status" value="1"/>
</dbReference>
<dbReference type="FunFam" id="3.40.50.1380:FF:000001">
    <property type="entry name" value="Bifunctional purine biosynthesis protein PurH"/>
    <property type="match status" value="1"/>
</dbReference>
<dbReference type="Gene3D" id="3.40.140.20">
    <property type="match status" value="2"/>
</dbReference>
<dbReference type="Gene3D" id="3.40.50.1380">
    <property type="entry name" value="Methylglyoxal synthase-like domain"/>
    <property type="match status" value="1"/>
</dbReference>
<dbReference type="HAMAP" id="MF_00139">
    <property type="entry name" value="PurH"/>
    <property type="match status" value="1"/>
</dbReference>
<dbReference type="InterPro" id="IPR024051">
    <property type="entry name" value="AICAR_Tfase_dup_dom_sf"/>
</dbReference>
<dbReference type="InterPro" id="IPR016193">
    <property type="entry name" value="Cytidine_deaminase-like"/>
</dbReference>
<dbReference type="InterPro" id="IPR011607">
    <property type="entry name" value="MGS-like_dom"/>
</dbReference>
<dbReference type="InterPro" id="IPR036914">
    <property type="entry name" value="MGS-like_dom_sf"/>
</dbReference>
<dbReference type="InterPro" id="IPR002695">
    <property type="entry name" value="PurH-like"/>
</dbReference>
<dbReference type="NCBIfam" id="NF002049">
    <property type="entry name" value="PRK00881.1"/>
    <property type="match status" value="1"/>
</dbReference>
<dbReference type="NCBIfam" id="TIGR00355">
    <property type="entry name" value="purH"/>
    <property type="match status" value="1"/>
</dbReference>
<dbReference type="PANTHER" id="PTHR11692:SF0">
    <property type="entry name" value="BIFUNCTIONAL PURINE BIOSYNTHESIS PROTEIN ATIC"/>
    <property type="match status" value="1"/>
</dbReference>
<dbReference type="PANTHER" id="PTHR11692">
    <property type="entry name" value="BIFUNCTIONAL PURINE BIOSYNTHESIS PROTEIN PURH"/>
    <property type="match status" value="1"/>
</dbReference>
<dbReference type="Pfam" id="PF01808">
    <property type="entry name" value="AICARFT_IMPCHas"/>
    <property type="match status" value="1"/>
</dbReference>
<dbReference type="Pfam" id="PF02142">
    <property type="entry name" value="MGS"/>
    <property type="match status" value="1"/>
</dbReference>
<dbReference type="PIRSF" id="PIRSF000414">
    <property type="entry name" value="AICARFT_IMPCHas"/>
    <property type="match status" value="1"/>
</dbReference>
<dbReference type="SMART" id="SM00798">
    <property type="entry name" value="AICARFT_IMPCHas"/>
    <property type="match status" value="1"/>
</dbReference>
<dbReference type="SMART" id="SM00851">
    <property type="entry name" value="MGS"/>
    <property type="match status" value="1"/>
</dbReference>
<dbReference type="SUPFAM" id="SSF53927">
    <property type="entry name" value="Cytidine deaminase-like"/>
    <property type="match status" value="1"/>
</dbReference>
<dbReference type="SUPFAM" id="SSF52335">
    <property type="entry name" value="Methylglyoxal synthase-like"/>
    <property type="match status" value="1"/>
</dbReference>
<dbReference type="PROSITE" id="PS51855">
    <property type="entry name" value="MGS"/>
    <property type="match status" value="1"/>
</dbReference>
<accession>Q88U29</accession>
<accession>F9URJ6</accession>
<organism>
    <name type="scientific">Lactiplantibacillus plantarum (strain ATCC BAA-793 / NCIMB 8826 / WCFS1)</name>
    <name type="common">Lactobacillus plantarum</name>
    <dbReference type="NCBI Taxonomy" id="220668"/>
    <lineage>
        <taxon>Bacteria</taxon>
        <taxon>Bacillati</taxon>
        <taxon>Bacillota</taxon>
        <taxon>Bacilli</taxon>
        <taxon>Lactobacillales</taxon>
        <taxon>Lactobacillaceae</taxon>
        <taxon>Lactiplantibacillus</taxon>
    </lineage>
</organism>
<feature type="chain" id="PRO_0000192097" description="Bifunctional purine biosynthesis protein PurH">
    <location>
        <begin position="1"/>
        <end position="510"/>
    </location>
</feature>
<feature type="domain" description="MGS-like" evidence="2">
    <location>
        <begin position="1"/>
        <end position="145"/>
    </location>
</feature>
<name>PUR9_LACPL</name>
<evidence type="ECO:0000255" key="1">
    <source>
        <dbReference type="HAMAP-Rule" id="MF_00139"/>
    </source>
</evidence>
<evidence type="ECO:0000255" key="2">
    <source>
        <dbReference type="PROSITE-ProRule" id="PRU01202"/>
    </source>
</evidence>
<reference key="1">
    <citation type="journal article" date="2003" name="Proc. Natl. Acad. Sci. U.S.A.">
        <title>Complete genome sequence of Lactobacillus plantarum WCFS1.</title>
        <authorList>
            <person name="Kleerebezem M."/>
            <person name="Boekhorst J."/>
            <person name="van Kranenburg R."/>
            <person name="Molenaar D."/>
            <person name="Kuipers O.P."/>
            <person name="Leer R."/>
            <person name="Tarchini R."/>
            <person name="Peters S.A."/>
            <person name="Sandbrink H.M."/>
            <person name="Fiers M.W.E.J."/>
            <person name="Stiekema W."/>
            <person name="Klein Lankhorst R.M."/>
            <person name="Bron P.A."/>
            <person name="Hoffer S.M."/>
            <person name="Nierop Groot M.N."/>
            <person name="Kerkhoven R."/>
            <person name="De Vries M."/>
            <person name="Ursing B."/>
            <person name="De Vos W.M."/>
            <person name="Siezen R.J."/>
        </authorList>
    </citation>
    <scope>NUCLEOTIDE SEQUENCE [LARGE SCALE GENOMIC DNA]</scope>
    <source>
        <strain>ATCC BAA-793 / NCIMB 8826 / WCFS1</strain>
    </source>
</reference>
<reference key="2">
    <citation type="journal article" date="2012" name="J. Bacteriol.">
        <title>Complete resequencing and reannotation of the Lactobacillus plantarum WCFS1 genome.</title>
        <authorList>
            <person name="Siezen R.J."/>
            <person name="Francke C."/>
            <person name="Renckens B."/>
            <person name="Boekhorst J."/>
            <person name="Wels M."/>
            <person name="Kleerebezem M."/>
            <person name="van Hijum S.A."/>
        </authorList>
    </citation>
    <scope>NUCLEOTIDE SEQUENCE [LARGE SCALE GENOMIC DNA]</scope>
    <scope>GENOME REANNOTATION</scope>
    <source>
        <strain>ATCC BAA-793 / NCIMB 8826 / WCFS1</strain>
    </source>
</reference>